<organism>
    <name type="scientific">Streptococcus pyogenes serotype M12 (strain MGAS9429)</name>
    <dbReference type="NCBI Taxonomy" id="370551"/>
    <lineage>
        <taxon>Bacteria</taxon>
        <taxon>Bacillati</taxon>
        <taxon>Bacillota</taxon>
        <taxon>Bacilli</taxon>
        <taxon>Lactobacillales</taxon>
        <taxon>Streptococcaceae</taxon>
        <taxon>Streptococcus</taxon>
    </lineage>
</organism>
<protein>
    <recommendedName>
        <fullName evidence="1">Putative membrane protein insertion efficiency factor</fullName>
    </recommendedName>
</protein>
<keyword id="KW-1003">Cell membrane</keyword>
<keyword id="KW-0472">Membrane</keyword>
<reference key="1">
    <citation type="journal article" date="2006" name="Proc. Natl. Acad. Sci. U.S.A.">
        <title>Molecular genetic anatomy of inter- and intraserotype variation in the human bacterial pathogen group A Streptococcus.</title>
        <authorList>
            <person name="Beres S.B."/>
            <person name="Richter E.W."/>
            <person name="Nagiec M.J."/>
            <person name="Sumby P."/>
            <person name="Porcella S.F."/>
            <person name="DeLeo F.R."/>
            <person name="Musser J.M."/>
        </authorList>
    </citation>
    <scope>NUCLEOTIDE SEQUENCE [LARGE SCALE GENOMIC DNA]</scope>
    <source>
        <strain>MGAS9429</strain>
    </source>
</reference>
<proteinExistence type="inferred from homology"/>
<evidence type="ECO:0000255" key="1">
    <source>
        <dbReference type="HAMAP-Rule" id="MF_00386"/>
    </source>
</evidence>
<feature type="chain" id="PRO_0000253178" description="Putative membrane protein insertion efficiency factor">
    <location>
        <begin position="1"/>
        <end position="87"/>
    </location>
</feature>
<name>YIDD_STRPC</name>
<sequence>MMKKLLIVSVKAYQKYISPLSPPSCRYKPTCSAYMLTAIEKHGTKGILMGIARILRCHPFVAGGVDPVPEDFSLMRNKNTSKNAEKA</sequence>
<accession>Q1JNA1</accession>
<dbReference type="EMBL" id="CP000259">
    <property type="protein sequence ID" value="ABF31498.1"/>
    <property type="molecule type" value="Genomic_DNA"/>
</dbReference>
<dbReference type="KEGG" id="spk:MGAS9429_Spy0310"/>
<dbReference type="HOGENOM" id="CLU_144811_5_2_9"/>
<dbReference type="Proteomes" id="UP000002433">
    <property type="component" value="Chromosome"/>
</dbReference>
<dbReference type="GO" id="GO:0005886">
    <property type="term" value="C:plasma membrane"/>
    <property type="evidence" value="ECO:0007669"/>
    <property type="project" value="UniProtKB-SubCell"/>
</dbReference>
<dbReference type="HAMAP" id="MF_00386">
    <property type="entry name" value="UPF0161_YidD"/>
    <property type="match status" value="1"/>
</dbReference>
<dbReference type="InterPro" id="IPR002696">
    <property type="entry name" value="Membr_insert_effic_factor_YidD"/>
</dbReference>
<dbReference type="NCBIfam" id="TIGR00278">
    <property type="entry name" value="membrane protein insertion efficiency factor YidD"/>
    <property type="match status" value="1"/>
</dbReference>
<dbReference type="PANTHER" id="PTHR33383">
    <property type="entry name" value="MEMBRANE PROTEIN INSERTION EFFICIENCY FACTOR-RELATED"/>
    <property type="match status" value="1"/>
</dbReference>
<dbReference type="PANTHER" id="PTHR33383:SF1">
    <property type="entry name" value="MEMBRANE PROTEIN INSERTION EFFICIENCY FACTOR-RELATED"/>
    <property type="match status" value="1"/>
</dbReference>
<dbReference type="Pfam" id="PF01809">
    <property type="entry name" value="YidD"/>
    <property type="match status" value="1"/>
</dbReference>
<dbReference type="SMART" id="SM01234">
    <property type="entry name" value="Haemolytic"/>
    <property type="match status" value="1"/>
</dbReference>
<gene>
    <name type="ordered locus">MGAS9429_Spy0310</name>
</gene>
<comment type="function">
    <text evidence="1">Could be involved in insertion of integral membrane proteins into the membrane.</text>
</comment>
<comment type="subcellular location">
    <subcellularLocation>
        <location evidence="1">Cell membrane</location>
        <topology evidence="1">Peripheral membrane protein</topology>
        <orientation evidence="1">Cytoplasmic side</orientation>
    </subcellularLocation>
</comment>
<comment type="similarity">
    <text evidence="1">Belongs to the UPF0161 family.</text>
</comment>